<evidence type="ECO:0000255" key="1">
    <source>
        <dbReference type="HAMAP-Rule" id="MF_00165"/>
    </source>
</evidence>
<accession>B4RJR3</accession>
<comment type="function">
    <text evidence="1">Phosphorylation of dTMP to form dTDP in both de novo and salvage pathways of dTTP synthesis.</text>
</comment>
<comment type="catalytic activity">
    <reaction evidence="1">
        <text>dTMP + ATP = dTDP + ADP</text>
        <dbReference type="Rhea" id="RHEA:13517"/>
        <dbReference type="ChEBI" id="CHEBI:30616"/>
        <dbReference type="ChEBI" id="CHEBI:58369"/>
        <dbReference type="ChEBI" id="CHEBI:63528"/>
        <dbReference type="ChEBI" id="CHEBI:456216"/>
        <dbReference type="EC" id="2.7.4.9"/>
    </reaction>
</comment>
<comment type="similarity">
    <text evidence="1">Belongs to the thymidylate kinase family.</text>
</comment>
<feature type="chain" id="PRO_1000097413" description="Thymidylate kinase">
    <location>
        <begin position="1"/>
        <end position="206"/>
    </location>
</feature>
<feature type="binding site" evidence="1">
    <location>
        <begin position="10"/>
        <end position="17"/>
    </location>
    <ligand>
        <name>ATP</name>
        <dbReference type="ChEBI" id="CHEBI:30616"/>
    </ligand>
</feature>
<gene>
    <name evidence="1" type="primary">tmk</name>
    <name type="ordered locus">NGK_0373</name>
</gene>
<proteinExistence type="inferred from homology"/>
<organism>
    <name type="scientific">Neisseria gonorrhoeae (strain NCCP11945)</name>
    <dbReference type="NCBI Taxonomy" id="521006"/>
    <lineage>
        <taxon>Bacteria</taxon>
        <taxon>Pseudomonadati</taxon>
        <taxon>Pseudomonadota</taxon>
        <taxon>Betaproteobacteria</taxon>
        <taxon>Neisseriales</taxon>
        <taxon>Neisseriaceae</taxon>
        <taxon>Neisseria</taxon>
    </lineage>
</organism>
<dbReference type="EC" id="2.7.4.9" evidence="1"/>
<dbReference type="EMBL" id="CP001050">
    <property type="protein sequence ID" value="ACF29066.1"/>
    <property type="molecule type" value="Genomic_DNA"/>
</dbReference>
<dbReference type="RefSeq" id="WP_003687582.1">
    <property type="nucleotide sequence ID" value="NC_011035.1"/>
</dbReference>
<dbReference type="SMR" id="B4RJR3"/>
<dbReference type="KEGG" id="ngk:NGK_0373"/>
<dbReference type="HOGENOM" id="CLU_049131_0_2_4"/>
<dbReference type="Proteomes" id="UP000002564">
    <property type="component" value="Chromosome"/>
</dbReference>
<dbReference type="GO" id="GO:0005829">
    <property type="term" value="C:cytosol"/>
    <property type="evidence" value="ECO:0007669"/>
    <property type="project" value="TreeGrafter"/>
</dbReference>
<dbReference type="GO" id="GO:0005524">
    <property type="term" value="F:ATP binding"/>
    <property type="evidence" value="ECO:0007669"/>
    <property type="project" value="UniProtKB-UniRule"/>
</dbReference>
<dbReference type="GO" id="GO:0004798">
    <property type="term" value="F:dTMP kinase activity"/>
    <property type="evidence" value="ECO:0007669"/>
    <property type="project" value="UniProtKB-UniRule"/>
</dbReference>
<dbReference type="GO" id="GO:0006233">
    <property type="term" value="P:dTDP biosynthetic process"/>
    <property type="evidence" value="ECO:0007669"/>
    <property type="project" value="InterPro"/>
</dbReference>
<dbReference type="GO" id="GO:0006235">
    <property type="term" value="P:dTTP biosynthetic process"/>
    <property type="evidence" value="ECO:0007669"/>
    <property type="project" value="UniProtKB-UniRule"/>
</dbReference>
<dbReference type="GO" id="GO:0006227">
    <property type="term" value="P:dUDP biosynthetic process"/>
    <property type="evidence" value="ECO:0007669"/>
    <property type="project" value="TreeGrafter"/>
</dbReference>
<dbReference type="CDD" id="cd01672">
    <property type="entry name" value="TMPK"/>
    <property type="match status" value="1"/>
</dbReference>
<dbReference type="FunFam" id="3.40.50.300:FF:000225">
    <property type="entry name" value="Thymidylate kinase"/>
    <property type="match status" value="1"/>
</dbReference>
<dbReference type="Gene3D" id="3.40.50.300">
    <property type="entry name" value="P-loop containing nucleotide triphosphate hydrolases"/>
    <property type="match status" value="1"/>
</dbReference>
<dbReference type="HAMAP" id="MF_00165">
    <property type="entry name" value="Thymidylate_kinase"/>
    <property type="match status" value="1"/>
</dbReference>
<dbReference type="InterPro" id="IPR027417">
    <property type="entry name" value="P-loop_NTPase"/>
</dbReference>
<dbReference type="InterPro" id="IPR039430">
    <property type="entry name" value="Thymidylate_kin-like_dom"/>
</dbReference>
<dbReference type="InterPro" id="IPR018094">
    <property type="entry name" value="Thymidylate_kinase"/>
</dbReference>
<dbReference type="NCBIfam" id="TIGR00041">
    <property type="entry name" value="DTMP_kinase"/>
    <property type="match status" value="1"/>
</dbReference>
<dbReference type="PANTHER" id="PTHR10344">
    <property type="entry name" value="THYMIDYLATE KINASE"/>
    <property type="match status" value="1"/>
</dbReference>
<dbReference type="PANTHER" id="PTHR10344:SF4">
    <property type="entry name" value="UMP-CMP KINASE 2, MITOCHONDRIAL"/>
    <property type="match status" value="1"/>
</dbReference>
<dbReference type="Pfam" id="PF02223">
    <property type="entry name" value="Thymidylate_kin"/>
    <property type="match status" value="1"/>
</dbReference>
<dbReference type="SUPFAM" id="SSF52540">
    <property type="entry name" value="P-loop containing nucleoside triphosphate hydrolases"/>
    <property type="match status" value="1"/>
</dbReference>
<keyword id="KW-0067">ATP-binding</keyword>
<keyword id="KW-0418">Kinase</keyword>
<keyword id="KW-0545">Nucleotide biosynthesis</keyword>
<keyword id="KW-0547">Nucleotide-binding</keyword>
<keyword id="KW-0808">Transferase</keyword>
<sequence>MKPQFITLDGIDGAGKSTNLAVIKAWFERRGLPVLFTREPGGTPVGEALREILLNPETKAGLRAETLMMFAARMQHIEEVILPALSDGIHVVSDRFTDATFAYQGGGRGMPSEDIEILEHWVQGGLRPDLTLLLDVPLEVSMARIGQAREKDRFEQEQADFFMRVRGVYLDRAAACPERYAVIDSNRSLDEVRNSIEKVLDGHFGC</sequence>
<name>KTHY_NEIG2</name>
<protein>
    <recommendedName>
        <fullName evidence="1">Thymidylate kinase</fullName>
        <ecNumber evidence="1">2.7.4.9</ecNumber>
    </recommendedName>
    <alternativeName>
        <fullName evidence="1">dTMP kinase</fullName>
    </alternativeName>
</protein>
<reference key="1">
    <citation type="journal article" date="2008" name="J. Bacteriol.">
        <title>Complete genome sequence of Neisseria gonorrhoeae NCCP11945.</title>
        <authorList>
            <person name="Chung G.T."/>
            <person name="Yoo J.S."/>
            <person name="Oh H.B."/>
            <person name="Lee Y.S."/>
            <person name="Cha S.H."/>
            <person name="Kim S.J."/>
            <person name="Yoo C.K."/>
        </authorList>
    </citation>
    <scope>NUCLEOTIDE SEQUENCE [LARGE SCALE GENOMIC DNA]</scope>
    <source>
        <strain>NCCP11945</strain>
    </source>
</reference>